<feature type="chain" id="PRO_0000023165" description="Aspartate 1-decarboxylase beta chain" evidence="1">
    <location>
        <begin position="1"/>
        <end position="24"/>
    </location>
</feature>
<feature type="chain" id="PRO_0000023166" description="Aspartate 1-decarboxylase alpha chain" evidence="1">
    <location>
        <begin position="25"/>
        <end position="127"/>
    </location>
</feature>
<feature type="active site" description="Schiff-base intermediate with substrate; via pyruvic acid" evidence="1">
    <location>
        <position position="25"/>
    </location>
</feature>
<feature type="active site" description="Proton donor" evidence="1">
    <location>
        <position position="58"/>
    </location>
</feature>
<feature type="binding site" evidence="1">
    <location>
        <position position="57"/>
    </location>
    <ligand>
        <name>substrate</name>
    </ligand>
</feature>
<feature type="binding site" evidence="1">
    <location>
        <begin position="73"/>
        <end position="75"/>
    </location>
    <ligand>
        <name>substrate</name>
    </ligand>
</feature>
<feature type="modified residue" description="Pyruvic acid (Ser)" evidence="1">
    <location>
        <position position="25"/>
    </location>
</feature>
<protein>
    <recommendedName>
        <fullName evidence="1">Aspartate 1-decarboxylase</fullName>
        <ecNumber evidence="1">4.1.1.11</ecNumber>
    </recommendedName>
    <alternativeName>
        <fullName evidence="1">Aspartate alpha-decarboxylase</fullName>
    </alternativeName>
    <component>
        <recommendedName>
            <fullName evidence="1">Aspartate 1-decarboxylase beta chain</fullName>
        </recommendedName>
    </component>
    <component>
        <recommendedName>
            <fullName evidence="1">Aspartate 1-decarboxylase alpha chain</fullName>
        </recommendedName>
    </component>
</protein>
<proteinExistence type="inferred from homology"/>
<evidence type="ECO:0000255" key="1">
    <source>
        <dbReference type="HAMAP-Rule" id="MF_00446"/>
    </source>
</evidence>
<dbReference type="EC" id="4.1.1.11" evidence="1"/>
<dbReference type="EMBL" id="BX571857">
    <property type="protein sequence ID" value="CAG44298.1"/>
    <property type="molecule type" value="Genomic_DNA"/>
</dbReference>
<dbReference type="RefSeq" id="WP_000621533.1">
    <property type="nucleotide sequence ID" value="NC_002953.3"/>
</dbReference>
<dbReference type="SMR" id="Q6G679"/>
<dbReference type="KEGG" id="sas:SAS2482"/>
<dbReference type="HOGENOM" id="CLU_115305_2_0_9"/>
<dbReference type="UniPathway" id="UPA00028">
    <property type="reaction ID" value="UER00002"/>
</dbReference>
<dbReference type="GO" id="GO:0005829">
    <property type="term" value="C:cytosol"/>
    <property type="evidence" value="ECO:0007669"/>
    <property type="project" value="TreeGrafter"/>
</dbReference>
<dbReference type="GO" id="GO:0004068">
    <property type="term" value="F:aspartate 1-decarboxylase activity"/>
    <property type="evidence" value="ECO:0007669"/>
    <property type="project" value="UniProtKB-UniRule"/>
</dbReference>
<dbReference type="GO" id="GO:0006523">
    <property type="term" value="P:alanine biosynthetic process"/>
    <property type="evidence" value="ECO:0007669"/>
    <property type="project" value="InterPro"/>
</dbReference>
<dbReference type="GO" id="GO:0015940">
    <property type="term" value="P:pantothenate biosynthetic process"/>
    <property type="evidence" value="ECO:0007669"/>
    <property type="project" value="UniProtKB-UniRule"/>
</dbReference>
<dbReference type="CDD" id="cd06919">
    <property type="entry name" value="Asp_decarbox"/>
    <property type="match status" value="1"/>
</dbReference>
<dbReference type="Gene3D" id="2.40.40.20">
    <property type="match status" value="1"/>
</dbReference>
<dbReference type="HAMAP" id="MF_00446">
    <property type="entry name" value="PanD"/>
    <property type="match status" value="1"/>
</dbReference>
<dbReference type="InterPro" id="IPR009010">
    <property type="entry name" value="Asp_de-COase-like_dom_sf"/>
</dbReference>
<dbReference type="InterPro" id="IPR003190">
    <property type="entry name" value="Asp_decarbox"/>
</dbReference>
<dbReference type="NCBIfam" id="TIGR00223">
    <property type="entry name" value="panD"/>
    <property type="match status" value="1"/>
</dbReference>
<dbReference type="PANTHER" id="PTHR21012">
    <property type="entry name" value="ASPARTATE 1-DECARBOXYLASE"/>
    <property type="match status" value="1"/>
</dbReference>
<dbReference type="PANTHER" id="PTHR21012:SF0">
    <property type="entry name" value="ASPARTATE 1-DECARBOXYLASE"/>
    <property type="match status" value="1"/>
</dbReference>
<dbReference type="Pfam" id="PF02261">
    <property type="entry name" value="Asp_decarbox"/>
    <property type="match status" value="1"/>
</dbReference>
<dbReference type="PIRSF" id="PIRSF006246">
    <property type="entry name" value="Asp_decarbox"/>
    <property type="match status" value="1"/>
</dbReference>
<dbReference type="SUPFAM" id="SSF50692">
    <property type="entry name" value="ADC-like"/>
    <property type="match status" value="1"/>
</dbReference>
<reference key="1">
    <citation type="journal article" date="2004" name="Proc. Natl. Acad. Sci. U.S.A.">
        <title>Complete genomes of two clinical Staphylococcus aureus strains: evidence for the rapid evolution of virulence and drug resistance.</title>
        <authorList>
            <person name="Holden M.T.G."/>
            <person name="Feil E.J."/>
            <person name="Lindsay J.A."/>
            <person name="Peacock S.J."/>
            <person name="Day N.P.J."/>
            <person name="Enright M.C."/>
            <person name="Foster T.J."/>
            <person name="Moore C.E."/>
            <person name="Hurst L."/>
            <person name="Atkin R."/>
            <person name="Barron A."/>
            <person name="Bason N."/>
            <person name="Bentley S.D."/>
            <person name="Chillingworth C."/>
            <person name="Chillingworth T."/>
            <person name="Churcher C."/>
            <person name="Clark L."/>
            <person name="Corton C."/>
            <person name="Cronin A."/>
            <person name="Doggett J."/>
            <person name="Dowd L."/>
            <person name="Feltwell T."/>
            <person name="Hance Z."/>
            <person name="Harris B."/>
            <person name="Hauser H."/>
            <person name="Holroyd S."/>
            <person name="Jagels K."/>
            <person name="James K.D."/>
            <person name="Lennard N."/>
            <person name="Line A."/>
            <person name="Mayes R."/>
            <person name="Moule S."/>
            <person name="Mungall K."/>
            <person name="Ormond D."/>
            <person name="Quail M.A."/>
            <person name="Rabbinowitsch E."/>
            <person name="Rutherford K.M."/>
            <person name="Sanders M."/>
            <person name="Sharp S."/>
            <person name="Simmonds M."/>
            <person name="Stevens K."/>
            <person name="Whitehead S."/>
            <person name="Barrell B.G."/>
            <person name="Spratt B.G."/>
            <person name="Parkhill J."/>
        </authorList>
    </citation>
    <scope>NUCLEOTIDE SEQUENCE [LARGE SCALE GENOMIC DNA]</scope>
    <source>
        <strain>MSSA476</strain>
    </source>
</reference>
<name>PAND_STAAS</name>
<comment type="function">
    <text evidence="1">Catalyzes the pyruvoyl-dependent decarboxylation of aspartate to produce beta-alanine.</text>
</comment>
<comment type="catalytic activity">
    <reaction evidence="1">
        <text>L-aspartate + H(+) = beta-alanine + CO2</text>
        <dbReference type="Rhea" id="RHEA:19497"/>
        <dbReference type="ChEBI" id="CHEBI:15378"/>
        <dbReference type="ChEBI" id="CHEBI:16526"/>
        <dbReference type="ChEBI" id="CHEBI:29991"/>
        <dbReference type="ChEBI" id="CHEBI:57966"/>
        <dbReference type="EC" id="4.1.1.11"/>
    </reaction>
</comment>
<comment type="cofactor">
    <cofactor evidence="1">
        <name>pyruvate</name>
        <dbReference type="ChEBI" id="CHEBI:15361"/>
    </cofactor>
    <text evidence="1">Binds 1 pyruvoyl group covalently per subunit.</text>
</comment>
<comment type="pathway">
    <text evidence="1">Cofactor biosynthesis; (R)-pantothenate biosynthesis; beta-alanine from L-aspartate: step 1/1.</text>
</comment>
<comment type="subunit">
    <text evidence="1">Heterooctamer of four alpha and four beta subunits.</text>
</comment>
<comment type="subcellular location">
    <subcellularLocation>
        <location evidence="1">Cytoplasm</location>
    </subcellularLocation>
</comment>
<comment type="PTM">
    <text evidence="1">Is synthesized initially as an inactive proenzyme, which is activated by self-cleavage at a specific serine bond to produce a beta-subunit with a hydroxyl group at its C-terminus and an alpha-subunit with a pyruvoyl group at its N-terminus.</text>
</comment>
<comment type="similarity">
    <text evidence="1">Belongs to the PanD family.</text>
</comment>
<organism>
    <name type="scientific">Staphylococcus aureus (strain MSSA476)</name>
    <dbReference type="NCBI Taxonomy" id="282459"/>
    <lineage>
        <taxon>Bacteria</taxon>
        <taxon>Bacillati</taxon>
        <taxon>Bacillota</taxon>
        <taxon>Bacilli</taxon>
        <taxon>Bacillales</taxon>
        <taxon>Staphylococcaceae</taxon>
        <taxon>Staphylococcus</taxon>
    </lineage>
</organism>
<accession>Q6G679</accession>
<keyword id="KW-0068">Autocatalytic cleavage</keyword>
<keyword id="KW-0963">Cytoplasm</keyword>
<keyword id="KW-0210">Decarboxylase</keyword>
<keyword id="KW-0456">Lyase</keyword>
<keyword id="KW-0566">Pantothenate biosynthesis</keyword>
<keyword id="KW-0670">Pyruvate</keyword>
<keyword id="KW-0704">Schiff base</keyword>
<keyword id="KW-0865">Zymogen</keyword>
<sequence length="127" mass="14050">MIRTMMNAKIHRARVTESNLNYVGSITIDSDILEAVDILPNEKVAIVNNNNGARFETYVIAGERGSGKICLNGAASRLVEVGDVVIIMTYAQLNEEEIQNHAPKVAVMNEDNVIIEMIHEKENTIVL</sequence>
<gene>
    <name evidence="1" type="primary">panD</name>
    <name type="ordered locus">SAS2482</name>
</gene>